<proteinExistence type="evidence at protein level"/>
<sequence length="17" mass="1843">GCCHIIACRMGCSPCCW</sequence>
<comment type="subcellular location">
    <subcellularLocation>
        <location evidence="2">Secreted</location>
    </subcellularLocation>
</comment>
<comment type="tissue specificity">
    <text evidence="4">Expressed by the venom duct.</text>
</comment>
<comment type="domain">
    <text evidence="3">The cysteine framework is III (CC-C-C-CC). Classified in the M-2 branch, since 2 residues stand between the fourth and the fifth cysteine residues.</text>
</comment>
<comment type="similarity">
    <text evidence="3">Belongs to the conotoxin M superfamily.</text>
</comment>
<name>M314_CONTE</name>
<organism>
    <name type="scientific">Conus textile</name>
    <name type="common">Cloth-of-gold cone</name>
    <dbReference type="NCBI Taxonomy" id="6494"/>
    <lineage>
        <taxon>Eukaryota</taxon>
        <taxon>Metazoa</taxon>
        <taxon>Spiralia</taxon>
        <taxon>Lophotrochozoa</taxon>
        <taxon>Mollusca</taxon>
        <taxon>Gastropoda</taxon>
        <taxon>Caenogastropoda</taxon>
        <taxon>Neogastropoda</taxon>
        <taxon>Conoidea</taxon>
        <taxon>Conidae</taxon>
        <taxon>Conus</taxon>
        <taxon>Cylinder</taxon>
    </lineage>
</organism>
<keyword id="KW-0903">Direct protein sequencing</keyword>
<keyword id="KW-1015">Disulfide bond</keyword>
<keyword id="KW-0558">Oxidation</keyword>
<keyword id="KW-0964">Secreted</keyword>
<keyword id="KW-0800">Toxin</keyword>
<dbReference type="GO" id="GO:0005576">
    <property type="term" value="C:extracellular region"/>
    <property type="evidence" value="ECO:0007669"/>
    <property type="project" value="UniProtKB-SubCell"/>
</dbReference>
<dbReference type="GO" id="GO:0090729">
    <property type="term" value="F:toxin activity"/>
    <property type="evidence" value="ECO:0007669"/>
    <property type="project" value="UniProtKB-KW"/>
</dbReference>
<accession>P0DPK9</accession>
<reference key="1">
    <citation type="journal article" date="2012" name="J. Proteome Res.">
        <title>Constrained de novo sequencing of conotoxins.</title>
        <authorList>
            <person name="Bhatia S."/>
            <person name="Kil Y.J."/>
            <person name="Ueberheide B."/>
            <person name="Chait B.T."/>
            <person name="Tayo L."/>
            <person name="Cruz L."/>
            <person name="Lu B."/>
            <person name="Yates J.R. III"/>
            <person name="Bern M."/>
        </authorList>
    </citation>
    <scope>PROTEIN SEQUENCE</scope>
    <scope>IDENTIFICATION BY MASS SPECTROMETRY</scope>
    <scope>SUBCELLULAR LOCATION</scope>
    <scope>OXIDATION AT MET-10</scope>
    <source>
        <tissue>Venom</tissue>
    </source>
</reference>
<evidence type="ECO:0000250" key="1">
    <source>
        <dbReference type="UniProtKB" id="P0CI24"/>
    </source>
</evidence>
<evidence type="ECO:0000269" key="2">
    <source>
    </source>
</evidence>
<evidence type="ECO:0000305" key="3"/>
<evidence type="ECO:0000305" key="4">
    <source>
    </source>
</evidence>
<protein>
    <recommendedName>
        <fullName evidence="4">Conotoxin SI.14</fullName>
    </recommendedName>
</protein>
<feature type="peptide" id="PRO_0000445045" description="Conotoxin SI.14" evidence="2">
    <location>
        <begin position="1"/>
        <end position="17"/>
    </location>
</feature>
<feature type="modified residue" description="Methionine sulfoxide" evidence="2">
    <location>
        <position position="10"/>
    </location>
</feature>
<feature type="disulfide bond" evidence="1">
    <location>
        <begin position="2"/>
        <end position="16"/>
    </location>
</feature>
<feature type="disulfide bond" evidence="1">
    <location>
        <begin position="3"/>
        <end position="12"/>
    </location>
</feature>
<feature type="disulfide bond" evidence="1">
    <location>
        <begin position="8"/>
        <end position="15"/>
    </location>
</feature>
<feature type="unsure residue" description="I or L" evidence="2">
    <location>
        <position position="5"/>
    </location>
</feature>
<feature type="unsure residue" description="I or L" evidence="2">
    <location>
        <position position="6"/>
    </location>
</feature>
<feature type="sequence conflict" description="In Ref. 1; AA sequence." evidence="4" ref="1">
    <original>S</original>
    <variation>T</variation>
    <location>
        <position position="13"/>
    </location>
</feature>